<feature type="chain" id="PRO_0000326415" description="Jararafibrase-3">
    <location>
        <begin position="1"/>
        <end position="43" status="greater than"/>
    </location>
</feature>
<feature type="domain" description="C-type lectin" evidence="1">
    <location>
        <begin position="10"/>
        <end position="43" status="greater than"/>
    </location>
</feature>
<feature type="unsure residue">
    <location>
        <position position="31"/>
    </location>
</feature>
<feature type="non-terminal residue">
    <location>
        <position position="43"/>
    </location>
</feature>
<sequence length="43" mass="5247">XNPPQDWLPMNGLYYKIFDELKAWKDAEMFCRKYKPGWHLASF</sequence>
<keyword id="KW-0106">Calcium</keyword>
<keyword id="KW-0903">Direct protein sequencing</keyword>
<keyword id="KW-0348">Hemagglutinin</keyword>
<keyword id="KW-1200">Hemorrhagic toxin</keyword>
<keyword id="KW-1199">Hemostasis impairing toxin</keyword>
<keyword id="KW-0378">Hydrolase</keyword>
<keyword id="KW-0430">Lectin</keyword>
<keyword id="KW-0964">Secreted</keyword>
<keyword id="KW-0800">Toxin</keyword>
<evidence type="ECO:0000255" key="1">
    <source>
        <dbReference type="PROSITE-ProRule" id="PRU00040"/>
    </source>
</evidence>
<evidence type="ECO:0000269" key="2">
    <source>
    </source>
</evidence>
<evidence type="ECO:0000269" key="3">
    <source>
    </source>
</evidence>
<evidence type="ECO:0000305" key="4"/>
<protein>
    <recommendedName>
        <fullName>Jararafibrase-3</fullName>
        <ecNumber>3.4.24.-</ecNumber>
    </recommendedName>
    <alternativeName>
        <fullName>Jararafibrase III</fullName>
    </alternativeName>
</protein>
<dbReference type="EC" id="3.4.24.-"/>
<dbReference type="GO" id="GO:0005576">
    <property type="term" value="C:extracellular region"/>
    <property type="evidence" value="ECO:0007669"/>
    <property type="project" value="UniProtKB-SubCell"/>
</dbReference>
<dbReference type="GO" id="GO:0030246">
    <property type="term" value="F:carbohydrate binding"/>
    <property type="evidence" value="ECO:0007669"/>
    <property type="project" value="UniProtKB-KW"/>
</dbReference>
<dbReference type="GO" id="GO:0016787">
    <property type="term" value="F:hydrolase activity"/>
    <property type="evidence" value="ECO:0007669"/>
    <property type="project" value="UniProtKB-KW"/>
</dbReference>
<dbReference type="GO" id="GO:0090729">
    <property type="term" value="F:toxin activity"/>
    <property type="evidence" value="ECO:0007669"/>
    <property type="project" value="UniProtKB-KW"/>
</dbReference>
<dbReference type="Gene3D" id="3.10.100.10">
    <property type="entry name" value="Mannose-Binding Protein A, subunit A"/>
    <property type="match status" value="1"/>
</dbReference>
<dbReference type="InterPro" id="IPR016186">
    <property type="entry name" value="C-type_lectin-like/link_sf"/>
</dbReference>
<dbReference type="InterPro" id="IPR016187">
    <property type="entry name" value="CTDL_fold"/>
</dbReference>
<dbReference type="SUPFAM" id="SSF56436">
    <property type="entry name" value="C-type lectin-like"/>
    <property type="match status" value="1"/>
</dbReference>
<proteinExistence type="evidence at protein level"/>
<name>LECJ3_BOTJA</name>
<comment type="function">
    <text evidence="2 3">May have both metalloproteinase and lectin activities. Induces local hemorrhage in the skin of rats. Degrades type-IV collagen, gelatin, laminin and fibronectin. Has hemagglutinating activity on red blood cells.</text>
</comment>
<comment type="activity regulation">
    <text evidence="3">Inhibited by 1,10-phenanthroline and EDTA.</text>
</comment>
<comment type="subunit">
    <text evidence="3">Monomer.</text>
</comment>
<comment type="subcellular location">
    <subcellularLocation>
        <location>Secreted</location>
    </subcellularLocation>
</comment>
<comment type="tissue specificity">
    <text>Expressed by the venom gland.</text>
</comment>
<comment type="similarity">
    <text evidence="4">Belongs to the true venom lectin family.</text>
</comment>
<organism>
    <name type="scientific">Bothrops jararaca</name>
    <name type="common">Jararaca</name>
    <name type="synonym">Bothrops jajaraca</name>
    <dbReference type="NCBI Taxonomy" id="8724"/>
    <lineage>
        <taxon>Eukaryota</taxon>
        <taxon>Metazoa</taxon>
        <taxon>Chordata</taxon>
        <taxon>Craniata</taxon>
        <taxon>Vertebrata</taxon>
        <taxon>Euteleostomi</taxon>
        <taxon>Lepidosauria</taxon>
        <taxon>Squamata</taxon>
        <taxon>Bifurcata</taxon>
        <taxon>Unidentata</taxon>
        <taxon>Episquamata</taxon>
        <taxon>Toxicofera</taxon>
        <taxon>Serpentes</taxon>
        <taxon>Colubroidea</taxon>
        <taxon>Viperidae</taxon>
        <taxon>Crotalinae</taxon>
        <taxon>Bothrops</taxon>
    </lineage>
</organism>
<reference key="1">
    <citation type="journal article" date="2002" name="Toxicon">
        <title>N-terminal amino acid sequences and some characteristics of fibrinolytic/hemorrhagic metalloproteinases purified from Bothrops jararaca venom.</title>
        <authorList>
            <person name="Maruyama M."/>
            <person name="Sugiki M."/>
            <person name="Anai K."/>
            <person name="Yoshida E."/>
        </authorList>
    </citation>
    <scope>PROTEIN SEQUENCE</scope>
    <scope>FUNCTION</scope>
    <source>
        <tissue>Venom</tissue>
    </source>
</reference>
<reference key="2">
    <citation type="journal article" date="1993" name="Enzyme Protein">
        <title>Purification and characterization of low molecular weight fibrinolytic/hemorrhagic enzymes from snake (Bothrops jararaca) venom.</title>
        <authorList>
            <person name="Maruyama M."/>
            <person name="Tanigawa M."/>
            <person name="Sugiki M."/>
            <person name="Yoshida E."/>
            <person name="Mihara H."/>
        </authorList>
    </citation>
    <scope>FUNCTION</scope>
    <scope>ACTIVITY REGULATION</scope>
    <scope>SUBUNIT</scope>
    <source>
        <tissue>Venom</tissue>
    </source>
</reference>
<accession>P0C6S5</accession>